<feature type="chain" id="PRO_1000022309" description="Potassium-transporting ATPase KdpC subunit">
    <location>
        <begin position="1"/>
        <end position="193"/>
    </location>
</feature>
<feature type="transmembrane region" description="Helical" evidence="1">
    <location>
        <begin position="7"/>
        <end position="27"/>
    </location>
</feature>
<evidence type="ECO:0000255" key="1">
    <source>
        <dbReference type="HAMAP-Rule" id="MF_00276"/>
    </source>
</evidence>
<protein>
    <recommendedName>
        <fullName evidence="1">Potassium-transporting ATPase KdpC subunit</fullName>
    </recommendedName>
    <alternativeName>
        <fullName evidence="1">ATP phosphohydrolase [potassium-transporting] C chain</fullName>
    </alternativeName>
    <alternativeName>
        <fullName evidence="1">Potassium-binding and translocating subunit C</fullName>
    </alternativeName>
    <alternativeName>
        <fullName evidence="1">Potassium-translocating ATPase C chain</fullName>
    </alternativeName>
</protein>
<organism>
    <name type="scientific">Rhodospirillum rubrum (strain ATCC 11170 / ATH 1.1.1 / DSM 467 / LMG 4362 / NCIMB 8255 / S1)</name>
    <dbReference type="NCBI Taxonomy" id="269796"/>
    <lineage>
        <taxon>Bacteria</taxon>
        <taxon>Pseudomonadati</taxon>
        <taxon>Pseudomonadota</taxon>
        <taxon>Alphaproteobacteria</taxon>
        <taxon>Rhodospirillales</taxon>
        <taxon>Rhodospirillaceae</taxon>
        <taxon>Rhodospirillum</taxon>
    </lineage>
</organism>
<accession>Q2RV87</accession>
<gene>
    <name evidence="1" type="primary">kdpC</name>
    <name type="ordered locus">Rru_A1157</name>
</gene>
<comment type="function">
    <text evidence="1">Part of the high-affinity ATP-driven potassium transport (or Kdp) system, which catalyzes the hydrolysis of ATP coupled with the electrogenic transport of potassium into the cytoplasm. This subunit acts as a catalytic chaperone that increases the ATP-binding affinity of the ATP-hydrolyzing subunit KdpB by the formation of a transient KdpB/KdpC/ATP ternary complex.</text>
</comment>
<comment type="subunit">
    <text evidence="1">The system is composed of three essential subunits: KdpA, KdpB and KdpC.</text>
</comment>
<comment type="subcellular location">
    <subcellularLocation>
        <location evidence="1">Cell inner membrane</location>
        <topology evidence="1">Single-pass membrane protein</topology>
    </subcellularLocation>
</comment>
<comment type="similarity">
    <text evidence="1">Belongs to the KdpC family.</text>
</comment>
<dbReference type="EMBL" id="CP000230">
    <property type="protein sequence ID" value="ABC21958.1"/>
    <property type="molecule type" value="Genomic_DNA"/>
</dbReference>
<dbReference type="RefSeq" id="WP_011388912.1">
    <property type="nucleotide sequence ID" value="NC_007643.1"/>
</dbReference>
<dbReference type="RefSeq" id="YP_426245.1">
    <property type="nucleotide sequence ID" value="NC_007643.1"/>
</dbReference>
<dbReference type="SMR" id="Q2RV87"/>
<dbReference type="STRING" id="269796.Rru_A1157"/>
<dbReference type="EnsemblBacteria" id="ABC21958">
    <property type="protein sequence ID" value="ABC21958"/>
    <property type="gene ID" value="Rru_A1157"/>
</dbReference>
<dbReference type="KEGG" id="rru:Rru_A1157"/>
<dbReference type="PATRIC" id="fig|269796.9.peg.1219"/>
<dbReference type="eggNOG" id="COG2156">
    <property type="taxonomic scope" value="Bacteria"/>
</dbReference>
<dbReference type="HOGENOM" id="CLU_077094_2_0_5"/>
<dbReference type="PhylomeDB" id="Q2RV87"/>
<dbReference type="Proteomes" id="UP000001929">
    <property type="component" value="Chromosome"/>
</dbReference>
<dbReference type="GO" id="GO:0005886">
    <property type="term" value="C:plasma membrane"/>
    <property type="evidence" value="ECO:0007669"/>
    <property type="project" value="UniProtKB-SubCell"/>
</dbReference>
<dbReference type="GO" id="GO:0005524">
    <property type="term" value="F:ATP binding"/>
    <property type="evidence" value="ECO:0007669"/>
    <property type="project" value="UniProtKB-UniRule"/>
</dbReference>
<dbReference type="GO" id="GO:0008556">
    <property type="term" value="F:P-type potassium transmembrane transporter activity"/>
    <property type="evidence" value="ECO:0007669"/>
    <property type="project" value="InterPro"/>
</dbReference>
<dbReference type="HAMAP" id="MF_00276">
    <property type="entry name" value="KdpC"/>
    <property type="match status" value="1"/>
</dbReference>
<dbReference type="InterPro" id="IPR003820">
    <property type="entry name" value="KdpC"/>
</dbReference>
<dbReference type="NCBIfam" id="TIGR00681">
    <property type="entry name" value="kdpC"/>
    <property type="match status" value="1"/>
</dbReference>
<dbReference type="NCBIfam" id="NF001454">
    <property type="entry name" value="PRK00315.1"/>
    <property type="match status" value="1"/>
</dbReference>
<dbReference type="PANTHER" id="PTHR30042">
    <property type="entry name" value="POTASSIUM-TRANSPORTING ATPASE C CHAIN"/>
    <property type="match status" value="1"/>
</dbReference>
<dbReference type="PANTHER" id="PTHR30042:SF2">
    <property type="entry name" value="POTASSIUM-TRANSPORTING ATPASE KDPC SUBUNIT"/>
    <property type="match status" value="1"/>
</dbReference>
<dbReference type="Pfam" id="PF02669">
    <property type="entry name" value="KdpC"/>
    <property type="match status" value="1"/>
</dbReference>
<dbReference type="PIRSF" id="PIRSF001296">
    <property type="entry name" value="K_ATPase_KdpC"/>
    <property type="match status" value="1"/>
</dbReference>
<name>KDPC_RHORT</name>
<sequence length="193" mass="20053">MLRTLRPALVLFAALTLLTGVAYPLAVTGLAQVLFPEQANGSLIERGGTVIGSALIAQAFTGEAYFHPRPSMAGTGYEANNSGASNLGPTNQGLVDQVAARITAAKEANPGNYGGVPADLVTASGSGLDPHISQAAARWQAARVAKARGLDLQRAVALVYEFTSPRQLGILGEPRVNVLAINLALDERFPLAH</sequence>
<reference key="1">
    <citation type="journal article" date="2011" name="Stand. Genomic Sci.">
        <title>Complete genome sequence of Rhodospirillum rubrum type strain (S1).</title>
        <authorList>
            <person name="Munk A.C."/>
            <person name="Copeland A."/>
            <person name="Lucas S."/>
            <person name="Lapidus A."/>
            <person name="Del Rio T.G."/>
            <person name="Barry K."/>
            <person name="Detter J.C."/>
            <person name="Hammon N."/>
            <person name="Israni S."/>
            <person name="Pitluck S."/>
            <person name="Brettin T."/>
            <person name="Bruce D."/>
            <person name="Han C."/>
            <person name="Tapia R."/>
            <person name="Gilna P."/>
            <person name="Schmutz J."/>
            <person name="Larimer F."/>
            <person name="Land M."/>
            <person name="Kyrpides N.C."/>
            <person name="Mavromatis K."/>
            <person name="Richardson P."/>
            <person name="Rohde M."/>
            <person name="Goeker M."/>
            <person name="Klenk H.P."/>
            <person name="Zhang Y."/>
            <person name="Roberts G.P."/>
            <person name="Reslewic S."/>
            <person name="Schwartz D.C."/>
        </authorList>
    </citation>
    <scope>NUCLEOTIDE SEQUENCE [LARGE SCALE GENOMIC DNA]</scope>
    <source>
        <strain>ATCC 11170 / ATH 1.1.1 / DSM 467 / LMG 4362 / NCIMB 8255 / S1</strain>
    </source>
</reference>
<keyword id="KW-0067">ATP-binding</keyword>
<keyword id="KW-0997">Cell inner membrane</keyword>
<keyword id="KW-1003">Cell membrane</keyword>
<keyword id="KW-0406">Ion transport</keyword>
<keyword id="KW-0472">Membrane</keyword>
<keyword id="KW-0547">Nucleotide-binding</keyword>
<keyword id="KW-0630">Potassium</keyword>
<keyword id="KW-0633">Potassium transport</keyword>
<keyword id="KW-1185">Reference proteome</keyword>
<keyword id="KW-0812">Transmembrane</keyword>
<keyword id="KW-1133">Transmembrane helix</keyword>
<keyword id="KW-0813">Transport</keyword>
<proteinExistence type="inferred from homology"/>